<accession>Q4X1Y0</accession>
<proteinExistence type="inferred from homology"/>
<evidence type="ECO:0000250" key="1"/>
<reference key="1">
    <citation type="journal article" date="2005" name="Nature">
        <title>Genomic sequence of the pathogenic and allergenic filamentous fungus Aspergillus fumigatus.</title>
        <authorList>
            <person name="Nierman W.C."/>
            <person name="Pain A."/>
            <person name="Anderson M.J."/>
            <person name="Wortman J.R."/>
            <person name="Kim H.S."/>
            <person name="Arroyo J."/>
            <person name="Berriman M."/>
            <person name="Abe K."/>
            <person name="Archer D.B."/>
            <person name="Bermejo C."/>
            <person name="Bennett J.W."/>
            <person name="Bowyer P."/>
            <person name="Chen D."/>
            <person name="Collins M."/>
            <person name="Coulsen R."/>
            <person name="Davies R."/>
            <person name="Dyer P.S."/>
            <person name="Farman M.L."/>
            <person name="Fedorova N."/>
            <person name="Fedorova N.D."/>
            <person name="Feldblyum T.V."/>
            <person name="Fischer R."/>
            <person name="Fosker N."/>
            <person name="Fraser A."/>
            <person name="Garcia J.L."/>
            <person name="Garcia M.J."/>
            <person name="Goble A."/>
            <person name="Goldman G.H."/>
            <person name="Gomi K."/>
            <person name="Griffith-Jones S."/>
            <person name="Gwilliam R."/>
            <person name="Haas B.J."/>
            <person name="Haas H."/>
            <person name="Harris D.E."/>
            <person name="Horiuchi H."/>
            <person name="Huang J."/>
            <person name="Humphray S."/>
            <person name="Jimenez J."/>
            <person name="Keller N."/>
            <person name="Khouri H."/>
            <person name="Kitamoto K."/>
            <person name="Kobayashi T."/>
            <person name="Konzack S."/>
            <person name="Kulkarni R."/>
            <person name="Kumagai T."/>
            <person name="Lafton A."/>
            <person name="Latge J.-P."/>
            <person name="Li W."/>
            <person name="Lord A."/>
            <person name="Lu C."/>
            <person name="Majoros W.H."/>
            <person name="May G.S."/>
            <person name="Miller B.L."/>
            <person name="Mohamoud Y."/>
            <person name="Molina M."/>
            <person name="Monod M."/>
            <person name="Mouyna I."/>
            <person name="Mulligan S."/>
            <person name="Murphy L.D."/>
            <person name="O'Neil S."/>
            <person name="Paulsen I."/>
            <person name="Penalva M.A."/>
            <person name="Pertea M."/>
            <person name="Price C."/>
            <person name="Pritchard B.L."/>
            <person name="Quail M.A."/>
            <person name="Rabbinowitsch E."/>
            <person name="Rawlins N."/>
            <person name="Rajandream M.A."/>
            <person name="Reichard U."/>
            <person name="Renauld H."/>
            <person name="Robson G.D."/>
            <person name="Rodriguez de Cordoba S."/>
            <person name="Rodriguez-Pena J.M."/>
            <person name="Ronning C.M."/>
            <person name="Rutter S."/>
            <person name="Salzberg S.L."/>
            <person name="Sanchez M."/>
            <person name="Sanchez-Ferrero J.C."/>
            <person name="Saunders D."/>
            <person name="Seeger K."/>
            <person name="Squares R."/>
            <person name="Squares S."/>
            <person name="Takeuchi M."/>
            <person name="Tekaia F."/>
            <person name="Turner G."/>
            <person name="Vazquez de Aldana C.R."/>
            <person name="Weidman J."/>
            <person name="White O."/>
            <person name="Woodward J.R."/>
            <person name="Yu J.-H."/>
            <person name="Fraser C.M."/>
            <person name="Galagan J.E."/>
            <person name="Asai K."/>
            <person name="Machida M."/>
            <person name="Hall N."/>
            <person name="Barrell B.G."/>
            <person name="Denning D.W."/>
        </authorList>
    </citation>
    <scope>NUCLEOTIDE SEQUENCE [LARGE SCALE GENOMIC DNA]</scope>
    <source>
        <strain>ATCC MYA-4609 / CBS 101355 / FGSC A1100 / Af293</strain>
    </source>
</reference>
<protein>
    <recommendedName>
        <fullName>Polyadenylation factor subunit 2</fullName>
    </recommendedName>
</protein>
<keyword id="KW-0159">Chromosome partition</keyword>
<keyword id="KW-0507">mRNA processing</keyword>
<keyword id="KW-0539">Nucleus</keyword>
<keyword id="KW-1185">Reference proteome</keyword>
<keyword id="KW-0677">Repeat</keyword>
<keyword id="KW-0853">WD repeat</keyword>
<dbReference type="EMBL" id="AAHF01000001">
    <property type="protein sequence ID" value="EAL93135.1"/>
    <property type="molecule type" value="Genomic_DNA"/>
</dbReference>
<dbReference type="RefSeq" id="XP_755173.1">
    <property type="nucleotide sequence ID" value="XM_750080.1"/>
</dbReference>
<dbReference type="SMR" id="Q4X1Y0"/>
<dbReference type="FunCoup" id="Q4X1Y0">
    <property type="interactions" value="229"/>
</dbReference>
<dbReference type="STRING" id="330879.Q4X1Y0"/>
<dbReference type="EnsemblFungi" id="EAL93135">
    <property type="protein sequence ID" value="EAL93135"/>
    <property type="gene ID" value="AFUA_2G08390"/>
</dbReference>
<dbReference type="GeneID" id="3513214"/>
<dbReference type="KEGG" id="afm:AFUA_2G08390"/>
<dbReference type="VEuPathDB" id="FungiDB:Afu2g08390"/>
<dbReference type="eggNOG" id="KOG0284">
    <property type="taxonomic scope" value="Eukaryota"/>
</dbReference>
<dbReference type="HOGENOM" id="CLU_000288_77_1_1"/>
<dbReference type="InParanoid" id="Q4X1Y0"/>
<dbReference type="OMA" id="HHWDVKS"/>
<dbReference type="OrthoDB" id="16717at2759"/>
<dbReference type="PHI-base" id="PHI:2514"/>
<dbReference type="Proteomes" id="UP000002530">
    <property type="component" value="Chromosome 2"/>
</dbReference>
<dbReference type="GO" id="GO:0000785">
    <property type="term" value="C:chromatin"/>
    <property type="evidence" value="ECO:0007669"/>
    <property type="project" value="EnsemblFungi"/>
</dbReference>
<dbReference type="GO" id="GO:0005847">
    <property type="term" value="C:mRNA cleavage and polyadenylation specificity factor complex"/>
    <property type="evidence" value="ECO:0000318"/>
    <property type="project" value="GO_Central"/>
</dbReference>
<dbReference type="GO" id="GO:0007059">
    <property type="term" value="P:chromosome segregation"/>
    <property type="evidence" value="ECO:0007669"/>
    <property type="project" value="UniProtKB-KW"/>
</dbReference>
<dbReference type="GO" id="GO:0180010">
    <property type="term" value="P:co-transcriptional mRNA 3'-end processing, cleavage and polyadenylation pathway"/>
    <property type="evidence" value="ECO:0007669"/>
    <property type="project" value="EnsemblFungi"/>
</dbReference>
<dbReference type="CDD" id="cd00200">
    <property type="entry name" value="WD40"/>
    <property type="match status" value="1"/>
</dbReference>
<dbReference type="FunFam" id="2.130.10.10:FF:002068">
    <property type="entry name" value="Polyadenylation factor subunit 2"/>
    <property type="match status" value="1"/>
</dbReference>
<dbReference type="FunFam" id="2.130.10.10:FF:002044">
    <property type="entry name" value="Pre-mRNA cleavage and polyadenylation factor (CPF) complex subunit"/>
    <property type="match status" value="1"/>
</dbReference>
<dbReference type="Gene3D" id="2.130.10.10">
    <property type="entry name" value="YVTN repeat-like/Quinoprotein amine dehydrogenase"/>
    <property type="match status" value="2"/>
</dbReference>
<dbReference type="InterPro" id="IPR045245">
    <property type="entry name" value="Pfs2-like"/>
</dbReference>
<dbReference type="InterPro" id="IPR015943">
    <property type="entry name" value="WD40/YVTN_repeat-like_dom_sf"/>
</dbReference>
<dbReference type="InterPro" id="IPR036322">
    <property type="entry name" value="WD40_repeat_dom_sf"/>
</dbReference>
<dbReference type="InterPro" id="IPR001680">
    <property type="entry name" value="WD40_rpt"/>
</dbReference>
<dbReference type="PANTHER" id="PTHR22836:SF0">
    <property type="entry name" value="PRE-MRNA 3' END PROCESSING PROTEIN WDR33"/>
    <property type="match status" value="1"/>
</dbReference>
<dbReference type="PANTHER" id="PTHR22836">
    <property type="entry name" value="WD40 REPEAT PROTEIN"/>
    <property type="match status" value="1"/>
</dbReference>
<dbReference type="Pfam" id="PF00400">
    <property type="entry name" value="WD40"/>
    <property type="match status" value="6"/>
</dbReference>
<dbReference type="SMART" id="SM00320">
    <property type="entry name" value="WD40"/>
    <property type="match status" value="6"/>
</dbReference>
<dbReference type="SUPFAM" id="SSF50978">
    <property type="entry name" value="WD40 repeat-like"/>
    <property type="match status" value="1"/>
</dbReference>
<dbReference type="PROSITE" id="PS50082">
    <property type="entry name" value="WD_REPEATS_2"/>
    <property type="match status" value="6"/>
</dbReference>
<dbReference type="PROSITE" id="PS50294">
    <property type="entry name" value="WD_REPEATS_REGION"/>
    <property type="match status" value="1"/>
</dbReference>
<comment type="function">
    <text evidence="1">Required for 3'-end cleavage and polyadenylation of pre-mRNAs. Also involved in chromosome segregation where it has a role in chromosome attachment to the mitotic spindle (By similarity).</text>
</comment>
<comment type="subcellular location">
    <subcellularLocation>
        <location evidence="1">Nucleus</location>
    </subcellularLocation>
</comment>
<feature type="chain" id="PRO_0000238496" description="Polyadenylation factor subunit 2">
    <location>
        <begin position="1"/>
        <end position="510"/>
    </location>
</feature>
<feature type="repeat" description="WD 1">
    <location>
        <begin position="26"/>
        <end position="65"/>
    </location>
</feature>
<feature type="repeat" description="WD 2">
    <location>
        <begin position="91"/>
        <end position="130"/>
    </location>
</feature>
<feature type="repeat" description="WD 3">
    <location>
        <begin position="133"/>
        <end position="172"/>
    </location>
</feature>
<feature type="repeat" description="WD 4">
    <location>
        <begin position="175"/>
        <end position="215"/>
    </location>
</feature>
<feature type="repeat" description="WD 5">
    <location>
        <begin position="218"/>
        <end position="258"/>
    </location>
</feature>
<feature type="repeat" description="WD 6">
    <location>
        <begin position="288"/>
        <end position="327"/>
    </location>
</feature>
<name>PFS2_ASPFU</name>
<organism>
    <name type="scientific">Aspergillus fumigatus (strain ATCC MYA-4609 / CBS 101355 / FGSC A1100 / Af293)</name>
    <name type="common">Neosartorya fumigata</name>
    <dbReference type="NCBI Taxonomy" id="330879"/>
    <lineage>
        <taxon>Eukaryota</taxon>
        <taxon>Fungi</taxon>
        <taxon>Dikarya</taxon>
        <taxon>Ascomycota</taxon>
        <taxon>Pezizomycotina</taxon>
        <taxon>Eurotiomycetes</taxon>
        <taxon>Eurotiomycetidae</taxon>
        <taxon>Eurotiales</taxon>
        <taxon>Aspergillaceae</taxon>
        <taxon>Aspergillus</taxon>
        <taxon>Aspergillus subgen. Fumigati</taxon>
    </lineage>
</organism>
<sequence length="510" mass="56077">MLPPLARIHSPADTIPVRHLHQSIGKSKKPITVVRWTPEGRRLLTGGHTGEFMLWNGTAFNFETVMDVRGQKGDIKYWRPNFNNVETIDDAHHDAVRDLAWSPSDTKFLSASDDTTLKIFDFTARTADTVLTGHNWDVKSCDWHPTKGLLVSGSKDHQVKFWDPRTARCLTTLHSHKNTVTTTRFSRVNSNLLATSSRDQTARVFDLRMMRDICILRGHEKPISSLTWHPIHSSLISTGSEDGSLYHYLLDEPNLPSGQVPTIAPYDSPDPANTPAQVIYPAHRIQYAHSATIWSLDWHPLGHILASGSKDNFTRFWSRARPGETSYMKDRFHIGEEAAEAQGTWSRGFGRRQMREEEEQEAQDEAESLVDQKNTTAQSLPGIQIAPPGLGSLQTGSGSLLPGIGAPQPAPQAGMSASMPQMDPGRLAAILSQQNPSQPQNFPSATGIPGFPMPPAMSGTPPLNIDLAELQKQLLSQGISPQNFASLAASLGSAGLPGLQSSTPDNTYRR</sequence>
<gene>
    <name type="primary">pfs2</name>
    <name type="ORF">AFUA_2G08390</name>
</gene>